<feature type="chain" id="PRO_0000290738" description="Undecaprenyl-diphosphatase">
    <location>
        <begin position="1"/>
        <end position="274"/>
    </location>
</feature>
<feature type="transmembrane region" description="Helical" evidence="1">
    <location>
        <begin position="40"/>
        <end position="60"/>
    </location>
</feature>
<feature type="transmembrane region" description="Helical" evidence="1">
    <location>
        <begin position="90"/>
        <end position="110"/>
    </location>
</feature>
<feature type="transmembrane region" description="Helical" evidence="1">
    <location>
        <begin position="114"/>
        <end position="134"/>
    </location>
</feature>
<feature type="transmembrane region" description="Helical" evidence="1">
    <location>
        <begin position="147"/>
        <end position="167"/>
    </location>
</feature>
<feature type="transmembrane region" description="Helical" evidence="1">
    <location>
        <begin position="190"/>
        <end position="210"/>
    </location>
</feature>
<feature type="transmembrane region" description="Helical" evidence="1">
    <location>
        <begin position="221"/>
        <end position="241"/>
    </location>
</feature>
<feature type="transmembrane region" description="Helical" evidence="1">
    <location>
        <begin position="252"/>
        <end position="272"/>
    </location>
</feature>
<proteinExistence type="inferred from homology"/>
<accession>A1SJZ1</accession>
<gene>
    <name evidence="1" type="primary">uppP</name>
    <name type="ordered locus">Noca_2623</name>
</gene>
<organism>
    <name type="scientific">Nocardioides sp. (strain ATCC BAA-499 / JS614)</name>
    <dbReference type="NCBI Taxonomy" id="196162"/>
    <lineage>
        <taxon>Bacteria</taxon>
        <taxon>Bacillati</taxon>
        <taxon>Actinomycetota</taxon>
        <taxon>Actinomycetes</taxon>
        <taxon>Propionibacteriales</taxon>
        <taxon>Nocardioidaceae</taxon>
        <taxon>Nocardioides</taxon>
    </lineage>
</organism>
<dbReference type="EC" id="3.6.1.27" evidence="1"/>
<dbReference type="EMBL" id="CP000509">
    <property type="protein sequence ID" value="ABL82126.1"/>
    <property type="molecule type" value="Genomic_DNA"/>
</dbReference>
<dbReference type="SMR" id="A1SJZ1"/>
<dbReference type="STRING" id="196162.Noca_2623"/>
<dbReference type="KEGG" id="nca:Noca_2623"/>
<dbReference type="eggNOG" id="COG1968">
    <property type="taxonomic scope" value="Bacteria"/>
</dbReference>
<dbReference type="HOGENOM" id="CLU_060296_1_0_11"/>
<dbReference type="Proteomes" id="UP000000640">
    <property type="component" value="Chromosome"/>
</dbReference>
<dbReference type="GO" id="GO:0005886">
    <property type="term" value="C:plasma membrane"/>
    <property type="evidence" value="ECO:0007669"/>
    <property type="project" value="UniProtKB-SubCell"/>
</dbReference>
<dbReference type="GO" id="GO:0050380">
    <property type="term" value="F:undecaprenyl-diphosphatase activity"/>
    <property type="evidence" value="ECO:0007669"/>
    <property type="project" value="UniProtKB-UniRule"/>
</dbReference>
<dbReference type="GO" id="GO:0071555">
    <property type="term" value="P:cell wall organization"/>
    <property type="evidence" value="ECO:0007669"/>
    <property type="project" value="UniProtKB-KW"/>
</dbReference>
<dbReference type="GO" id="GO:0009252">
    <property type="term" value="P:peptidoglycan biosynthetic process"/>
    <property type="evidence" value="ECO:0007669"/>
    <property type="project" value="UniProtKB-KW"/>
</dbReference>
<dbReference type="GO" id="GO:0008360">
    <property type="term" value="P:regulation of cell shape"/>
    <property type="evidence" value="ECO:0007669"/>
    <property type="project" value="UniProtKB-KW"/>
</dbReference>
<dbReference type="GO" id="GO:0046677">
    <property type="term" value="P:response to antibiotic"/>
    <property type="evidence" value="ECO:0007669"/>
    <property type="project" value="UniProtKB-UniRule"/>
</dbReference>
<dbReference type="HAMAP" id="MF_01006">
    <property type="entry name" value="Undec_diphosphatase"/>
    <property type="match status" value="1"/>
</dbReference>
<dbReference type="InterPro" id="IPR003824">
    <property type="entry name" value="UppP"/>
</dbReference>
<dbReference type="NCBIfam" id="NF001392">
    <property type="entry name" value="PRK00281.2-1"/>
    <property type="match status" value="1"/>
</dbReference>
<dbReference type="NCBIfam" id="NF001393">
    <property type="entry name" value="PRK00281.2-4"/>
    <property type="match status" value="1"/>
</dbReference>
<dbReference type="NCBIfam" id="TIGR00753">
    <property type="entry name" value="undec_PP_bacA"/>
    <property type="match status" value="1"/>
</dbReference>
<dbReference type="PANTHER" id="PTHR30622">
    <property type="entry name" value="UNDECAPRENYL-DIPHOSPHATASE"/>
    <property type="match status" value="1"/>
</dbReference>
<dbReference type="PANTHER" id="PTHR30622:SF4">
    <property type="entry name" value="UNDECAPRENYL-DIPHOSPHATASE"/>
    <property type="match status" value="1"/>
</dbReference>
<dbReference type="Pfam" id="PF02673">
    <property type="entry name" value="BacA"/>
    <property type="match status" value="1"/>
</dbReference>
<name>UPPP_NOCSJ</name>
<protein>
    <recommendedName>
        <fullName evidence="1">Undecaprenyl-diphosphatase</fullName>
        <ecNumber evidence="1">3.6.1.27</ecNumber>
    </recommendedName>
    <alternativeName>
        <fullName evidence="1">Bacitracin resistance protein</fullName>
    </alternativeName>
    <alternativeName>
        <fullName evidence="1">Undecaprenyl pyrophosphate phosphatase</fullName>
    </alternativeName>
</protein>
<reference key="1">
    <citation type="submission" date="2006-12" db="EMBL/GenBank/DDBJ databases">
        <title>Complete sequence of chromosome 1 of Nocardioides sp. JS614.</title>
        <authorList>
            <person name="Copeland A."/>
            <person name="Lucas S."/>
            <person name="Lapidus A."/>
            <person name="Barry K."/>
            <person name="Detter J.C."/>
            <person name="Glavina del Rio T."/>
            <person name="Hammon N."/>
            <person name="Israni S."/>
            <person name="Dalin E."/>
            <person name="Tice H."/>
            <person name="Pitluck S."/>
            <person name="Thompson L.S."/>
            <person name="Brettin T."/>
            <person name="Bruce D."/>
            <person name="Han C."/>
            <person name="Tapia R."/>
            <person name="Schmutz J."/>
            <person name="Larimer F."/>
            <person name="Land M."/>
            <person name="Hauser L."/>
            <person name="Kyrpides N."/>
            <person name="Kim E."/>
            <person name="Mattes T."/>
            <person name="Gossett J."/>
            <person name="Richardson P."/>
        </authorList>
    </citation>
    <scope>NUCLEOTIDE SEQUENCE [LARGE SCALE GENOMIC DNA]</scope>
    <source>
        <strain>ATCC BAA-499 / JS614</strain>
    </source>
</reference>
<comment type="function">
    <text evidence="1">Catalyzes the dephosphorylation of undecaprenyl diphosphate (UPP). Confers resistance to bacitracin.</text>
</comment>
<comment type="catalytic activity">
    <reaction evidence="1">
        <text>di-trans,octa-cis-undecaprenyl diphosphate + H2O = di-trans,octa-cis-undecaprenyl phosphate + phosphate + H(+)</text>
        <dbReference type="Rhea" id="RHEA:28094"/>
        <dbReference type="ChEBI" id="CHEBI:15377"/>
        <dbReference type="ChEBI" id="CHEBI:15378"/>
        <dbReference type="ChEBI" id="CHEBI:43474"/>
        <dbReference type="ChEBI" id="CHEBI:58405"/>
        <dbReference type="ChEBI" id="CHEBI:60392"/>
        <dbReference type="EC" id="3.6.1.27"/>
    </reaction>
</comment>
<comment type="subcellular location">
    <subcellularLocation>
        <location evidence="1">Cell membrane</location>
        <topology evidence="1">Multi-pass membrane protein</topology>
    </subcellularLocation>
</comment>
<comment type="miscellaneous">
    <text>Bacitracin is thought to be involved in the inhibition of peptidoglycan synthesis by sequestering undecaprenyl diphosphate, thereby reducing the pool of lipid carrier available.</text>
</comment>
<comment type="similarity">
    <text evidence="1">Belongs to the UppP family.</text>
</comment>
<evidence type="ECO:0000255" key="1">
    <source>
        <dbReference type="HAMAP-Rule" id="MF_01006"/>
    </source>
</evidence>
<sequence>MVDFLQALVLGLIQGLTEFLPISSSAHLRIYPELFGWGDPGAAFTAVIQIGTEVAVLMFFRKDIWRIGRAWLLSLFKPEYRGHLDARMGWFIIVGSVPIVLLGIALKDVIEEDFRSLWLIGTTLIVLGLVLGVADRLGGTDKTIKQISLRDAILMGLAQALALIPGVSRSGATLSMGRLLGYDREAATRYAFLLAIPAVIGAGVFELKDIPNGDNLYGWGPTIVATIVSFVVGYAAIAWLLRYVTTRSYAPFVLYRVALGAATLVLVATGVIAA</sequence>
<keyword id="KW-0046">Antibiotic resistance</keyword>
<keyword id="KW-1003">Cell membrane</keyword>
<keyword id="KW-0133">Cell shape</keyword>
<keyword id="KW-0961">Cell wall biogenesis/degradation</keyword>
<keyword id="KW-0378">Hydrolase</keyword>
<keyword id="KW-0472">Membrane</keyword>
<keyword id="KW-0573">Peptidoglycan synthesis</keyword>
<keyword id="KW-1185">Reference proteome</keyword>
<keyword id="KW-0812">Transmembrane</keyword>
<keyword id="KW-1133">Transmembrane helix</keyword>